<comment type="similarity">
    <text evidence="1">Belongs to the transferase hexapeptide repeat family.</text>
</comment>
<name>ATRF2_STAAM</name>
<evidence type="ECO:0000305" key="1"/>
<organism>
    <name type="scientific">Staphylococcus aureus (strain Mu50 / ATCC 700699)</name>
    <dbReference type="NCBI Taxonomy" id="158878"/>
    <lineage>
        <taxon>Bacteria</taxon>
        <taxon>Bacillati</taxon>
        <taxon>Bacillota</taxon>
        <taxon>Bacilli</taxon>
        <taxon>Bacillales</taxon>
        <taxon>Staphylococcaceae</taxon>
        <taxon>Staphylococcus</taxon>
    </lineage>
</organism>
<accession>Q7A2K9</accession>
<gene>
    <name type="ordered locus">SAV2555</name>
</gene>
<protein>
    <recommendedName>
        <fullName>Putative acetyltransferase SAV2555</fullName>
        <ecNumber>2.3.1.-</ecNumber>
    </recommendedName>
</protein>
<feature type="chain" id="PRO_0000068753" description="Putative acetyltransferase SAV2555">
    <location>
        <begin position="1"/>
        <end position="199"/>
    </location>
</feature>
<dbReference type="EC" id="2.3.1.-"/>
<dbReference type="EMBL" id="BA000017">
    <property type="protein sequence ID" value="BAB58717.1"/>
    <property type="molecule type" value="Genomic_DNA"/>
</dbReference>
<dbReference type="RefSeq" id="WP_000136487.1">
    <property type="nucleotide sequence ID" value="NC_002758.2"/>
</dbReference>
<dbReference type="SMR" id="Q7A2K9"/>
<dbReference type="KEGG" id="sav:SAV2555"/>
<dbReference type="HOGENOM" id="CLU_051638_3_0_9"/>
<dbReference type="PhylomeDB" id="Q7A2K9"/>
<dbReference type="Proteomes" id="UP000002481">
    <property type="component" value="Chromosome"/>
</dbReference>
<dbReference type="GO" id="GO:0008870">
    <property type="term" value="F:galactoside O-acetyltransferase activity"/>
    <property type="evidence" value="ECO:0007669"/>
    <property type="project" value="TreeGrafter"/>
</dbReference>
<dbReference type="CDD" id="cd03357">
    <property type="entry name" value="LbH_MAT_GAT"/>
    <property type="match status" value="1"/>
</dbReference>
<dbReference type="FunFam" id="2.160.10.10:FF:000008">
    <property type="entry name" value="Maltose O-acetyltransferase"/>
    <property type="match status" value="1"/>
</dbReference>
<dbReference type="Gene3D" id="2.160.10.10">
    <property type="entry name" value="Hexapeptide repeat proteins"/>
    <property type="match status" value="1"/>
</dbReference>
<dbReference type="InterPro" id="IPR001451">
    <property type="entry name" value="Hexapep"/>
</dbReference>
<dbReference type="InterPro" id="IPR039369">
    <property type="entry name" value="LacA-like"/>
</dbReference>
<dbReference type="InterPro" id="IPR024688">
    <property type="entry name" value="Mac_dom"/>
</dbReference>
<dbReference type="InterPro" id="IPR011004">
    <property type="entry name" value="Trimer_LpxA-like_sf"/>
</dbReference>
<dbReference type="PANTHER" id="PTHR43017:SF1">
    <property type="entry name" value="ACETYLTRANSFERASE YJL218W-RELATED"/>
    <property type="match status" value="1"/>
</dbReference>
<dbReference type="PANTHER" id="PTHR43017">
    <property type="entry name" value="GALACTOSIDE O-ACETYLTRANSFERASE"/>
    <property type="match status" value="1"/>
</dbReference>
<dbReference type="Pfam" id="PF00132">
    <property type="entry name" value="Hexapep"/>
    <property type="match status" value="1"/>
</dbReference>
<dbReference type="Pfam" id="PF14602">
    <property type="entry name" value="Hexapep_2"/>
    <property type="match status" value="1"/>
</dbReference>
<dbReference type="Pfam" id="PF12464">
    <property type="entry name" value="Mac"/>
    <property type="match status" value="1"/>
</dbReference>
<dbReference type="SMART" id="SM01266">
    <property type="entry name" value="Mac"/>
    <property type="match status" value="1"/>
</dbReference>
<dbReference type="SUPFAM" id="SSF51161">
    <property type="entry name" value="Trimeric LpxA-like enzymes"/>
    <property type="match status" value="1"/>
</dbReference>
<sequence>MTEKEKMLAEKWYDANFDQDLINERARAKDICFELNHTKPSDTNKRKELIDQLFQTTTDNVSISIPFDTDYGWNVKLGKNVYVNTNCYFMDGGQITIGDNVFIGPNCGFYTATHPLNFYHRNEGYEKAGPIHIGSNTWFGGHVAVLPGVTIGEGSVIGAGSVVTKDIPPHSLAVGNPCKVVRKIDNDLPSETLNDETIK</sequence>
<proteinExistence type="inferred from homology"/>
<reference key="1">
    <citation type="journal article" date="2001" name="Lancet">
        <title>Whole genome sequencing of meticillin-resistant Staphylococcus aureus.</title>
        <authorList>
            <person name="Kuroda M."/>
            <person name="Ohta T."/>
            <person name="Uchiyama I."/>
            <person name="Baba T."/>
            <person name="Yuzawa H."/>
            <person name="Kobayashi I."/>
            <person name="Cui L."/>
            <person name="Oguchi A."/>
            <person name="Aoki K."/>
            <person name="Nagai Y."/>
            <person name="Lian J.-Q."/>
            <person name="Ito T."/>
            <person name="Kanamori M."/>
            <person name="Matsumaru H."/>
            <person name="Maruyama A."/>
            <person name="Murakami H."/>
            <person name="Hosoyama A."/>
            <person name="Mizutani-Ui Y."/>
            <person name="Takahashi N.K."/>
            <person name="Sawano T."/>
            <person name="Inoue R."/>
            <person name="Kaito C."/>
            <person name="Sekimizu K."/>
            <person name="Hirakawa H."/>
            <person name="Kuhara S."/>
            <person name="Goto S."/>
            <person name="Yabuzaki J."/>
            <person name="Kanehisa M."/>
            <person name="Yamashita A."/>
            <person name="Oshima K."/>
            <person name="Furuya K."/>
            <person name="Yoshino C."/>
            <person name="Shiba T."/>
            <person name="Hattori M."/>
            <person name="Ogasawara N."/>
            <person name="Hayashi H."/>
            <person name="Hiramatsu K."/>
        </authorList>
    </citation>
    <scope>NUCLEOTIDE SEQUENCE [LARGE SCALE GENOMIC DNA]</scope>
    <source>
        <strain>Mu50 / ATCC 700699</strain>
    </source>
</reference>
<keyword id="KW-0012">Acyltransferase</keyword>
<keyword id="KW-0677">Repeat</keyword>
<keyword id="KW-0808">Transferase</keyword>